<comment type="function">
    <text evidence="1">Catalyzes the reversible phosphorylation of UMP to UDP.</text>
</comment>
<comment type="catalytic activity">
    <reaction evidence="1">
        <text>UMP + ATP = UDP + ADP</text>
        <dbReference type="Rhea" id="RHEA:24400"/>
        <dbReference type="ChEBI" id="CHEBI:30616"/>
        <dbReference type="ChEBI" id="CHEBI:57865"/>
        <dbReference type="ChEBI" id="CHEBI:58223"/>
        <dbReference type="ChEBI" id="CHEBI:456216"/>
        <dbReference type="EC" id="2.7.4.22"/>
    </reaction>
</comment>
<comment type="activity regulation">
    <text evidence="1">Allosterically activated by GTP. Inhibited by UTP.</text>
</comment>
<comment type="pathway">
    <text evidence="1">Pyrimidine metabolism; CTP biosynthesis via de novo pathway; UDP from UMP (UMPK route): step 1/1.</text>
</comment>
<comment type="subunit">
    <text evidence="1">Homohexamer.</text>
</comment>
<comment type="subcellular location">
    <subcellularLocation>
        <location evidence="1">Cytoplasm</location>
    </subcellularLocation>
</comment>
<comment type="similarity">
    <text evidence="1">Belongs to the UMP kinase family.</text>
</comment>
<organism>
    <name type="scientific">Bacillus licheniformis (strain ATCC 14580 / DSM 13 / JCM 2505 / CCUG 7422 / NBRC 12200 / NCIMB 9375 / NCTC 10341 / NRRL NRS-1264 / Gibson 46)</name>
    <dbReference type="NCBI Taxonomy" id="279010"/>
    <lineage>
        <taxon>Bacteria</taxon>
        <taxon>Bacillati</taxon>
        <taxon>Bacillota</taxon>
        <taxon>Bacilli</taxon>
        <taxon>Bacillales</taxon>
        <taxon>Bacillaceae</taxon>
        <taxon>Bacillus</taxon>
    </lineage>
</organism>
<proteinExistence type="inferred from homology"/>
<evidence type="ECO:0000255" key="1">
    <source>
        <dbReference type="HAMAP-Rule" id="MF_01220"/>
    </source>
</evidence>
<name>PYRH_BACLD</name>
<sequence length="240" mass="26066">MEKPKYNRIVLKLSGEALAGEQGNGINPTVIQSIAKQVKEIAELDVEVAVVVGGGNLWRGKTGSDLGMDRATADYMGMLATVMNSLALQDSLETLGIQSRVQTSIEMRQVAEPYIRRKAIRHLEKKRVVIFAAGTGNPYFSTDTTAALRAAEIEADVILMAKNNVDGVYNADPRTDETAVKYEKLSYLDVLKDGLAVMDSTASSLCMDNDIPLIVFSIMEEGNIKRAVLGEQIGTIVRGK</sequence>
<dbReference type="EC" id="2.7.4.22" evidence="1"/>
<dbReference type="EMBL" id="CP000002">
    <property type="protein sequence ID" value="AAU23407.2"/>
    <property type="molecule type" value="Genomic_DNA"/>
</dbReference>
<dbReference type="EMBL" id="AE017333">
    <property type="protein sequence ID" value="AAU40767.1"/>
    <property type="molecule type" value="Genomic_DNA"/>
</dbReference>
<dbReference type="RefSeq" id="WP_009328506.1">
    <property type="nucleotide sequence ID" value="NC_006322.1"/>
</dbReference>
<dbReference type="SMR" id="Q65JJ7"/>
<dbReference type="STRING" id="279010.BL01242"/>
<dbReference type="GeneID" id="92861535"/>
<dbReference type="KEGG" id="bld:BLi01872"/>
<dbReference type="KEGG" id="bli:BL01242"/>
<dbReference type="eggNOG" id="COG0528">
    <property type="taxonomic scope" value="Bacteria"/>
</dbReference>
<dbReference type="HOGENOM" id="CLU_033861_0_0_9"/>
<dbReference type="UniPathway" id="UPA00159">
    <property type="reaction ID" value="UER00275"/>
</dbReference>
<dbReference type="Proteomes" id="UP000000606">
    <property type="component" value="Chromosome"/>
</dbReference>
<dbReference type="GO" id="GO:0005737">
    <property type="term" value="C:cytoplasm"/>
    <property type="evidence" value="ECO:0007669"/>
    <property type="project" value="UniProtKB-SubCell"/>
</dbReference>
<dbReference type="GO" id="GO:0005524">
    <property type="term" value="F:ATP binding"/>
    <property type="evidence" value="ECO:0007669"/>
    <property type="project" value="UniProtKB-KW"/>
</dbReference>
<dbReference type="GO" id="GO:0033862">
    <property type="term" value="F:UMP kinase activity"/>
    <property type="evidence" value="ECO:0007669"/>
    <property type="project" value="UniProtKB-EC"/>
</dbReference>
<dbReference type="GO" id="GO:0044210">
    <property type="term" value="P:'de novo' CTP biosynthetic process"/>
    <property type="evidence" value="ECO:0007669"/>
    <property type="project" value="UniProtKB-UniRule"/>
</dbReference>
<dbReference type="GO" id="GO:0006225">
    <property type="term" value="P:UDP biosynthetic process"/>
    <property type="evidence" value="ECO:0007669"/>
    <property type="project" value="TreeGrafter"/>
</dbReference>
<dbReference type="CDD" id="cd04254">
    <property type="entry name" value="AAK_UMPK-PyrH-Ec"/>
    <property type="match status" value="1"/>
</dbReference>
<dbReference type="FunFam" id="3.40.1160.10:FF:000001">
    <property type="entry name" value="Uridylate kinase"/>
    <property type="match status" value="1"/>
</dbReference>
<dbReference type="Gene3D" id="3.40.1160.10">
    <property type="entry name" value="Acetylglutamate kinase-like"/>
    <property type="match status" value="1"/>
</dbReference>
<dbReference type="HAMAP" id="MF_01220_B">
    <property type="entry name" value="PyrH_B"/>
    <property type="match status" value="1"/>
</dbReference>
<dbReference type="InterPro" id="IPR036393">
    <property type="entry name" value="AceGlu_kinase-like_sf"/>
</dbReference>
<dbReference type="InterPro" id="IPR001048">
    <property type="entry name" value="Asp/Glu/Uridylate_kinase"/>
</dbReference>
<dbReference type="InterPro" id="IPR011817">
    <property type="entry name" value="Uridylate_kinase"/>
</dbReference>
<dbReference type="InterPro" id="IPR015963">
    <property type="entry name" value="Uridylate_kinase_bac"/>
</dbReference>
<dbReference type="NCBIfam" id="TIGR02075">
    <property type="entry name" value="pyrH_bact"/>
    <property type="match status" value="1"/>
</dbReference>
<dbReference type="PANTHER" id="PTHR42833">
    <property type="entry name" value="URIDYLATE KINASE"/>
    <property type="match status" value="1"/>
</dbReference>
<dbReference type="PANTHER" id="PTHR42833:SF4">
    <property type="entry name" value="URIDYLATE KINASE PUMPKIN, CHLOROPLASTIC"/>
    <property type="match status" value="1"/>
</dbReference>
<dbReference type="Pfam" id="PF00696">
    <property type="entry name" value="AA_kinase"/>
    <property type="match status" value="1"/>
</dbReference>
<dbReference type="PIRSF" id="PIRSF005650">
    <property type="entry name" value="Uridylate_kin"/>
    <property type="match status" value="1"/>
</dbReference>
<dbReference type="SUPFAM" id="SSF53633">
    <property type="entry name" value="Carbamate kinase-like"/>
    <property type="match status" value="1"/>
</dbReference>
<keyword id="KW-0021">Allosteric enzyme</keyword>
<keyword id="KW-0067">ATP-binding</keyword>
<keyword id="KW-0963">Cytoplasm</keyword>
<keyword id="KW-0418">Kinase</keyword>
<keyword id="KW-0547">Nucleotide-binding</keyword>
<keyword id="KW-0665">Pyrimidine biosynthesis</keyword>
<keyword id="KW-1185">Reference proteome</keyword>
<keyword id="KW-0808">Transferase</keyword>
<accession>Q65JJ7</accession>
<accession>Q62V02</accession>
<feature type="chain" id="PRO_1000053891" description="Uridylate kinase">
    <location>
        <begin position="1"/>
        <end position="240"/>
    </location>
</feature>
<feature type="region of interest" description="Involved in allosteric activation by GTP" evidence="1">
    <location>
        <begin position="20"/>
        <end position="25"/>
    </location>
</feature>
<feature type="binding site" evidence="1">
    <location>
        <begin position="12"/>
        <end position="15"/>
    </location>
    <ligand>
        <name>ATP</name>
        <dbReference type="ChEBI" id="CHEBI:30616"/>
    </ligand>
</feature>
<feature type="binding site" evidence="1">
    <location>
        <position position="54"/>
    </location>
    <ligand>
        <name>UMP</name>
        <dbReference type="ChEBI" id="CHEBI:57865"/>
    </ligand>
</feature>
<feature type="binding site" evidence="1">
    <location>
        <position position="55"/>
    </location>
    <ligand>
        <name>ATP</name>
        <dbReference type="ChEBI" id="CHEBI:30616"/>
    </ligand>
</feature>
<feature type="binding site" evidence="1">
    <location>
        <position position="59"/>
    </location>
    <ligand>
        <name>ATP</name>
        <dbReference type="ChEBI" id="CHEBI:30616"/>
    </ligand>
</feature>
<feature type="binding site" evidence="1">
    <location>
        <position position="74"/>
    </location>
    <ligand>
        <name>UMP</name>
        <dbReference type="ChEBI" id="CHEBI:57865"/>
    </ligand>
</feature>
<feature type="binding site" evidence="1">
    <location>
        <begin position="135"/>
        <end position="142"/>
    </location>
    <ligand>
        <name>UMP</name>
        <dbReference type="ChEBI" id="CHEBI:57865"/>
    </ligand>
</feature>
<feature type="binding site" evidence="1">
    <location>
        <position position="163"/>
    </location>
    <ligand>
        <name>ATP</name>
        <dbReference type="ChEBI" id="CHEBI:30616"/>
    </ligand>
</feature>
<feature type="binding site" evidence="1">
    <location>
        <position position="169"/>
    </location>
    <ligand>
        <name>ATP</name>
        <dbReference type="ChEBI" id="CHEBI:30616"/>
    </ligand>
</feature>
<feature type="binding site" evidence="1">
    <location>
        <position position="172"/>
    </location>
    <ligand>
        <name>ATP</name>
        <dbReference type="ChEBI" id="CHEBI:30616"/>
    </ligand>
</feature>
<protein>
    <recommendedName>
        <fullName evidence="1">Uridylate kinase</fullName>
        <shortName evidence="1">UK</shortName>
        <ecNumber evidence="1">2.7.4.22</ecNumber>
    </recommendedName>
    <alternativeName>
        <fullName evidence="1">Uridine monophosphate kinase</fullName>
        <shortName evidence="1">UMP kinase</shortName>
        <shortName evidence="1">UMPK</shortName>
    </alternativeName>
</protein>
<gene>
    <name evidence="1" type="primary">pyrH</name>
    <name type="ordered locus">BLi01872</name>
    <name type="ordered locus">BL01242</name>
</gene>
<reference key="1">
    <citation type="journal article" date="2004" name="J. Mol. Microbiol. Biotechnol.">
        <title>The complete genome sequence of Bacillus licheniformis DSM13, an organism with great industrial potential.</title>
        <authorList>
            <person name="Veith B."/>
            <person name="Herzberg C."/>
            <person name="Steckel S."/>
            <person name="Feesche J."/>
            <person name="Maurer K.H."/>
            <person name="Ehrenreich P."/>
            <person name="Baeumer S."/>
            <person name="Henne A."/>
            <person name="Liesegang H."/>
            <person name="Merkl R."/>
            <person name="Ehrenreich A."/>
            <person name="Gottschalk G."/>
        </authorList>
    </citation>
    <scope>NUCLEOTIDE SEQUENCE [LARGE SCALE GENOMIC DNA]</scope>
    <source>
        <strain>ATCC 14580 / DSM 13 / JCM 2505 / CCUG 7422 / NBRC 12200 / NCIMB 9375 / NCTC 10341 / NRRL NRS-1264 / Gibson 46</strain>
    </source>
</reference>
<reference key="2">
    <citation type="journal article" date="2004" name="Genome Biol.">
        <title>Complete genome sequence of the industrial bacterium Bacillus licheniformis and comparisons with closely related Bacillus species.</title>
        <authorList>
            <person name="Rey M.W."/>
            <person name="Ramaiya P."/>
            <person name="Nelson B.A."/>
            <person name="Brody-Karpin S.D."/>
            <person name="Zaretsky E.J."/>
            <person name="Tang M."/>
            <person name="Lopez de Leon A."/>
            <person name="Xiang H."/>
            <person name="Gusti V."/>
            <person name="Clausen I.G."/>
            <person name="Olsen P.B."/>
            <person name="Rasmussen M.D."/>
            <person name="Andersen J.T."/>
            <person name="Joergensen P.L."/>
            <person name="Larsen T.S."/>
            <person name="Sorokin A."/>
            <person name="Bolotin A."/>
            <person name="Lapidus A."/>
            <person name="Galleron N."/>
            <person name="Ehrlich S.D."/>
            <person name="Berka R.M."/>
        </authorList>
    </citation>
    <scope>NUCLEOTIDE SEQUENCE [LARGE SCALE GENOMIC DNA]</scope>
    <source>
        <strain>ATCC 14580 / DSM 13 / JCM 2505 / CCUG 7422 / NBRC 12200 / NCIMB 9375 / NCTC 10341 / NRRL NRS-1264 / Gibson 46</strain>
    </source>
</reference>